<protein>
    <recommendedName>
        <fullName evidence="7">Terpene cyclase ctvD</fullName>
        <ecNumber evidence="6">5.4.99.-</ecNumber>
    </recommendedName>
    <alternativeName>
        <fullName evidence="7">Citreoviridin biosynthesis protein D</fullName>
    </alternativeName>
</protein>
<feature type="chain" id="PRO_0000437744" description="Terpene cyclase ctvD">
    <location>
        <begin position="1"/>
        <end position="348"/>
    </location>
</feature>
<feature type="transmembrane region" description="Helical" evidence="1">
    <location>
        <begin position="2"/>
        <end position="22"/>
    </location>
</feature>
<feature type="transmembrane region" description="Helical" evidence="1">
    <location>
        <begin position="77"/>
        <end position="97"/>
    </location>
</feature>
<feature type="transmembrane region" description="Helical" evidence="1">
    <location>
        <begin position="116"/>
        <end position="136"/>
    </location>
</feature>
<feature type="transmembrane region" description="Helical" evidence="1">
    <location>
        <begin position="161"/>
        <end position="181"/>
    </location>
</feature>
<feature type="transmembrane region" description="Helical" evidence="1">
    <location>
        <begin position="191"/>
        <end position="211"/>
    </location>
</feature>
<feature type="transmembrane region" description="Helical" evidence="1">
    <location>
        <begin position="235"/>
        <end position="255"/>
    </location>
</feature>
<feature type="transmembrane region" description="Helical" evidence="1">
    <location>
        <begin position="283"/>
        <end position="303"/>
    </location>
</feature>
<feature type="transmembrane region" description="Helical" evidence="1">
    <location>
        <begin position="323"/>
        <end position="343"/>
    </location>
</feature>
<feature type="glycosylation site" description="N-linked (GlcNAc...) asparagine" evidence="2">
    <location>
        <position position="51"/>
    </location>
</feature>
<sequence>MALSAYFLLCLSVLGLDAIYGFGFRNGFLELMANSYRERKLSGTAEPLQGNITGTGLDELLGNLIVFYWPVLDGNHPGLSLQAFHFLGAIVAVWVAIQVQSWRSPNRNSLLRSPTLFAMLSQVVAIAVIVPLWCAISIWSSSSPRPITRAVSASAAHSIRLIPISMVLGFGIPTIGMLLPESTHQNLFSKQIAIAVWQIWPIYVALWHWGLRVLFRSRLKEGISVRTACRTACSFAFVCAIIPHAVSWGLSLTLIPTNLLADVLPWQFAGGGTVQVQSMAQGGLWFLQWDHLIGMGSFLLWAMHMRWTVEQQSSFLQTCYLALKVGVLCLISGPCGAAVWLLWEESQF</sequence>
<keyword id="KW-0325">Glycoprotein</keyword>
<keyword id="KW-0413">Isomerase</keyword>
<keyword id="KW-0472">Membrane</keyword>
<keyword id="KW-1185">Reference proteome</keyword>
<keyword id="KW-0812">Transmembrane</keyword>
<keyword id="KW-1133">Transmembrane helix</keyword>
<dbReference type="EC" id="5.4.99.-" evidence="6"/>
<dbReference type="EMBL" id="CH476608">
    <property type="protein sequence ID" value="EAU29810.1"/>
    <property type="molecule type" value="Genomic_DNA"/>
</dbReference>
<dbReference type="RefSeq" id="XP_001218241.1">
    <property type="nucleotide sequence ID" value="XM_001218240.1"/>
</dbReference>
<dbReference type="STRING" id="341663.Q0C9L5"/>
<dbReference type="GlyCosmos" id="Q0C9L5">
    <property type="glycosylation" value="1 site, No reported glycans"/>
</dbReference>
<dbReference type="EnsemblFungi" id="EAU29810">
    <property type="protein sequence ID" value="EAU29810"/>
    <property type="gene ID" value="ATEG_09619"/>
</dbReference>
<dbReference type="GeneID" id="4354537"/>
<dbReference type="VEuPathDB" id="FungiDB:ATEG_09619"/>
<dbReference type="eggNOG" id="ENOG502SHVK">
    <property type="taxonomic scope" value="Eukaryota"/>
</dbReference>
<dbReference type="HOGENOM" id="CLU_038717_0_0_1"/>
<dbReference type="OMA" id="DNYFAFM"/>
<dbReference type="OrthoDB" id="72269at2759"/>
<dbReference type="Proteomes" id="UP000007963">
    <property type="component" value="Unassembled WGS sequence"/>
</dbReference>
<dbReference type="GO" id="GO:0016020">
    <property type="term" value="C:membrane"/>
    <property type="evidence" value="ECO:0007669"/>
    <property type="project" value="UniProtKB-SubCell"/>
</dbReference>
<dbReference type="GO" id="GO:0016853">
    <property type="term" value="F:isomerase activity"/>
    <property type="evidence" value="ECO:0007669"/>
    <property type="project" value="UniProtKB-KW"/>
</dbReference>
<reference key="1">
    <citation type="submission" date="2005-09" db="EMBL/GenBank/DDBJ databases">
        <title>Annotation of the Aspergillus terreus NIH2624 genome.</title>
        <authorList>
            <person name="Birren B.W."/>
            <person name="Lander E.S."/>
            <person name="Galagan J.E."/>
            <person name="Nusbaum C."/>
            <person name="Devon K."/>
            <person name="Henn M."/>
            <person name="Ma L.-J."/>
            <person name="Jaffe D.B."/>
            <person name="Butler J."/>
            <person name="Alvarez P."/>
            <person name="Gnerre S."/>
            <person name="Grabherr M."/>
            <person name="Kleber M."/>
            <person name="Mauceli E.W."/>
            <person name="Brockman W."/>
            <person name="Rounsley S."/>
            <person name="Young S.K."/>
            <person name="LaButti K."/>
            <person name="Pushparaj V."/>
            <person name="DeCaprio D."/>
            <person name="Crawford M."/>
            <person name="Koehrsen M."/>
            <person name="Engels R."/>
            <person name="Montgomery P."/>
            <person name="Pearson M."/>
            <person name="Howarth C."/>
            <person name="Larson L."/>
            <person name="Luoma S."/>
            <person name="White J."/>
            <person name="Alvarado L."/>
            <person name="Kodira C.D."/>
            <person name="Zeng Q."/>
            <person name="Oleary S."/>
            <person name="Yandava C."/>
            <person name="Denning D.W."/>
            <person name="Nierman W.C."/>
            <person name="Milne T."/>
            <person name="Madden K."/>
        </authorList>
    </citation>
    <scope>NUCLEOTIDE SEQUENCE [LARGE SCALE GENOMIC DNA]</scope>
    <source>
        <strain>NIH 2624 / FGSC A1156</strain>
    </source>
</reference>
<reference key="2">
    <citation type="journal article" date="1989" name="Arch. Biochem. Biophys.">
        <title>Effect of citreoviridin and isocitreoviridin on beef heart mitochondrial ATPase.</title>
        <authorList>
            <person name="Sayood S.F."/>
            <person name="Suh H."/>
            <person name="Wilcox C.S."/>
            <person name="Schuster S.M."/>
        </authorList>
    </citation>
    <scope>BIOTECHNOLOGY</scope>
</reference>
<reference key="3">
    <citation type="journal article" date="2012" name="Blood">
        <title>Ectopic ATP synthase facilitates transfer of HIV-1 from antigen-presenting cells to CD4(+) target cells.</title>
        <authorList>
            <person name="Yavlovich A."/>
            <person name="Viard M."/>
            <person name="Zhou M."/>
            <person name="Veenstra T.D."/>
            <person name="Wang J.M."/>
            <person name="Gong W."/>
            <person name="Heldman E."/>
            <person name="Blumenthal R."/>
            <person name="Raviv Y."/>
        </authorList>
    </citation>
    <scope>BIOTECHNOLOGY</scope>
</reference>
<reference key="4">
    <citation type="journal article" date="2012" name="Cancer Res.">
        <title>Ectopic ATP synthase blockade suppresses lung adenocarcinoma growth by activating the unfolded protein response.</title>
        <authorList>
            <person name="Chang H.Y."/>
            <person name="Huang H.C."/>
            <person name="Huang T.C."/>
            <person name="Yang P.C."/>
            <person name="Wang Y.C."/>
            <person name="Juan H.F."/>
        </authorList>
    </citation>
    <scope>BIOTECHNOLOGY</scope>
</reference>
<reference key="5">
    <citation type="journal article" date="2016" name="Org. Lett.">
        <title>Biosynthetic pathway of the reduced polyketide product citreoviridin in Aspergillus terreus var. aureus revealed by heterologous expression in Aspergillus nidulans.</title>
        <authorList>
            <person name="Lin T.S."/>
            <person name="Chiang Y.M."/>
            <person name="Wang C.C."/>
        </authorList>
    </citation>
    <scope>FUNCTION</scope>
    <scope>PATHWAY</scope>
</reference>
<accession>Q0C9L5</accession>
<proteinExistence type="evidence at protein level"/>
<comment type="function">
    <text evidence="6">Hydrolase; part of the gene cluster that mediates the biosynthesis of citreoviridin, an inhibitor of the of F1-ATPase beta-subunit (PubMed:26954888). The HR-PKS ctvA accepts acetyl-CoA as the starter unit and catalyzes eight iterations of malonyl-CoA extension and four iterations of SAM-dependent methylation at C4, C12, C14, and C16 (PubMed:26954888). The KR and DH domains selectively act on the first six iterations to generate the hexaene chain (PubMed:26954888). In the last three iterations, the KR and DH domains terminate their functions to yield a beta,delta-diketo ester moiety, which then undergoes intramolecular cyclization to yield an alpha-pyrone intermediate (PubMed:26954888). Subsequently, ctvB methylates the alpha-pyrone hydroxyl group to generate citreomontanin (PubMed:26954888). In order to form the tetrahydrofuran ring with the correct stereochemistry, the terminal alkenes of citreomontanin need to undergo isomerization to yield a (17Z)-hexaene, a step that could be catalyzed by ctvC (PubMed:26954888). The (17Z)-hexaene then undergoes bisepoxidation by ctvC to form a (17R,16R,15S,14R)-bisepoxide moiety (PubMed:26954888). Lastly, ctvD acts as a regioselective hydrolase to form the tetrahydrofuran ring with the substituents in the correct absolute configuration, completing the biosynthesis of citreoviridin (PubMed:26954888).</text>
</comment>
<comment type="pathway">
    <text evidence="9">Mycotoxin biosynthesis.</text>
</comment>
<comment type="subcellular location">
    <subcellularLocation>
        <location evidence="1">Membrane</location>
        <topology evidence="1">Multi-pass membrane protein</topology>
    </subcellularLocation>
</comment>
<comment type="biotechnology">
    <text evidence="3 4 5">Citreoviridin inhibits mitochondrial oxidative phosphorylation by binding to the beta-subunit of F1-ATPase (PubMed:2523213). Ectopic mitochondrial ATP synthase is a factor that mediates HIV-1 transfer between antigen-presenting cells (APCs) and CD4+ target cells, and citreoviridin can completely block antigen-presenting cell (APC)-mediated transfer of HIV-1 at the APC-target cells (PubMed:22753871). Inhibition of Ectopic mitochondrial ATP synthase by citreoviridin can also lead to suppression of cancer growth by activating the unfolded protein response (PubMed:22822083).</text>
</comment>
<comment type="similarity">
    <text evidence="8">Belongs to the membrane-bound ascI terpene cyclase family.</text>
</comment>
<evidence type="ECO:0000255" key="1"/>
<evidence type="ECO:0000255" key="2">
    <source>
        <dbReference type="PROSITE-ProRule" id="PRU00498"/>
    </source>
</evidence>
<evidence type="ECO:0000269" key="3">
    <source>
    </source>
</evidence>
<evidence type="ECO:0000269" key="4">
    <source>
    </source>
</evidence>
<evidence type="ECO:0000269" key="5">
    <source>
    </source>
</evidence>
<evidence type="ECO:0000269" key="6">
    <source>
    </source>
</evidence>
<evidence type="ECO:0000303" key="7">
    <source>
    </source>
</evidence>
<evidence type="ECO:0000305" key="8"/>
<evidence type="ECO:0000305" key="9">
    <source>
    </source>
</evidence>
<gene>
    <name evidence="7" type="primary">ctvD</name>
    <name type="ORF">ATEG_09619</name>
</gene>
<name>CTVD_ASPTN</name>
<organism>
    <name type="scientific">Aspergillus terreus (strain NIH 2624 / FGSC A1156)</name>
    <dbReference type="NCBI Taxonomy" id="341663"/>
    <lineage>
        <taxon>Eukaryota</taxon>
        <taxon>Fungi</taxon>
        <taxon>Dikarya</taxon>
        <taxon>Ascomycota</taxon>
        <taxon>Pezizomycotina</taxon>
        <taxon>Eurotiomycetes</taxon>
        <taxon>Eurotiomycetidae</taxon>
        <taxon>Eurotiales</taxon>
        <taxon>Aspergillaceae</taxon>
        <taxon>Aspergillus</taxon>
        <taxon>Aspergillus subgen. Circumdati</taxon>
    </lineage>
</organism>